<reference key="1">
    <citation type="journal article" date="2008" name="J. Bacteriol.">
        <title>The complete genome sequence of Escherichia coli DH10B: insights into the biology of a laboratory workhorse.</title>
        <authorList>
            <person name="Durfee T."/>
            <person name="Nelson R."/>
            <person name="Baldwin S."/>
            <person name="Plunkett G. III"/>
            <person name="Burland V."/>
            <person name="Mau B."/>
            <person name="Petrosino J.F."/>
            <person name="Qin X."/>
            <person name="Muzny D.M."/>
            <person name="Ayele M."/>
            <person name="Gibbs R.A."/>
            <person name="Csorgo B."/>
            <person name="Posfai G."/>
            <person name="Weinstock G.M."/>
            <person name="Blattner F.R."/>
        </authorList>
    </citation>
    <scope>NUCLEOTIDE SEQUENCE [LARGE SCALE GENOMIC DNA]</scope>
    <source>
        <strain>K12 / DH10B</strain>
    </source>
</reference>
<comment type="function">
    <text evidence="1">Catalyzes the last two sequential reactions in the de novo biosynthetic pathway for UDP-N-acetylglucosamine (UDP-GlcNAc). The C-terminal domain catalyzes the transfer of acetyl group from acetyl coenzyme A to glucosamine-1-phosphate (GlcN-1-P) to produce N-acetylglucosamine-1-phosphate (GlcNAc-1-P), which is converted into UDP-GlcNAc by the transfer of uridine 5-monophosphate (from uridine 5-triphosphate), a reaction catalyzed by the N-terminal domain.</text>
</comment>
<comment type="catalytic activity">
    <reaction evidence="1">
        <text>alpha-D-glucosamine 1-phosphate + acetyl-CoA = N-acetyl-alpha-D-glucosamine 1-phosphate + CoA + H(+)</text>
        <dbReference type="Rhea" id="RHEA:13725"/>
        <dbReference type="ChEBI" id="CHEBI:15378"/>
        <dbReference type="ChEBI" id="CHEBI:57287"/>
        <dbReference type="ChEBI" id="CHEBI:57288"/>
        <dbReference type="ChEBI" id="CHEBI:57776"/>
        <dbReference type="ChEBI" id="CHEBI:58516"/>
        <dbReference type="EC" id="2.3.1.157"/>
    </reaction>
</comment>
<comment type="catalytic activity">
    <reaction evidence="1">
        <text>N-acetyl-alpha-D-glucosamine 1-phosphate + UTP + H(+) = UDP-N-acetyl-alpha-D-glucosamine + diphosphate</text>
        <dbReference type="Rhea" id="RHEA:13509"/>
        <dbReference type="ChEBI" id="CHEBI:15378"/>
        <dbReference type="ChEBI" id="CHEBI:33019"/>
        <dbReference type="ChEBI" id="CHEBI:46398"/>
        <dbReference type="ChEBI" id="CHEBI:57705"/>
        <dbReference type="ChEBI" id="CHEBI:57776"/>
        <dbReference type="EC" id="2.7.7.23"/>
    </reaction>
</comment>
<comment type="cofactor">
    <cofactor evidence="1">
        <name>Mg(2+)</name>
        <dbReference type="ChEBI" id="CHEBI:18420"/>
    </cofactor>
    <text evidence="1">Binds 1 Mg(2+) ion per subunit.</text>
</comment>
<comment type="pathway">
    <text evidence="1">Nucleotide-sugar biosynthesis; UDP-N-acetyl-alpha-D-glucosamine biosynthesis; N-acetyl-alpha-D-glucosamine 1-phosphate from alpha-D-glucosamine 6-phosphate (route II): step 2/2.</text>
</comment>
<comment type="pathway">
    <text evidence="1">Nucleotide-sugar biosynthesis; UDP-N-acetyl-alpha-D-glucosamine biosynthesis; UDP-N-acetyl-alpha-D-glucosamine from N-acetyl-alpha-D-glucosamine 1-phosphate: step 1/1.</text>
</comment>
<comment type="pathway">
    <text evidence="1">Bacterial outer membrane biogenesis; LPS lipid A biosynthesis.</text>
</comment>
<comment type="subunit">
    <text evidence="1">Homotrimer.</text>
</comment>
<comment type="subcellular location">
    <subcellularLocation>
        <location evidence="1">Cytoplasm</location>
    </subcellularLocation>
</comment>
<comment type="similarity">
    <text evidence="1">In the N-terminal section; belongs to the N-acetylglucosamine-1-phosphate uridyltransferase family.</text>
</comment>
<comment type="similarity">
    <text evidence="1">In the C-terminal section; belongs to the transferase hexapeptide repeat family.</text>
</comment>
<organism>
    <name type="scientific">Escherichia coli (strain K12 / DH10B)</name>
    <dbReference type="NCBI Taxonomy" id="316385"/>
    <lineage>
        <taxon>Bacteria</taxon>
        <taxon>Pseudomonadati</taxon>
        <taxon>Pseudomonadota</taxon>
        <taxon>Gammaproteobacteria</taxon>
        <taxon>Enterobacterales</taxon>
        <taxon>Enterobacteriaceae</taxon>
        <taxon>Escherichia</taxon>
    </lineage>
</organism>
<keyword id="KW-0012">Acyltransferase</keyword>
<keyword id="KW-0133">Cell shape</keyword>
<keyword id="KW-0961">Cell wall biogenesis/degradation</keyword>
<keyword id="KW-0963">Cytoplasm</keyword>
<keyword id="KW-0460">Magnesium</keyword>
<keyword id="KW-0479">Metal-binding</keyword>
<keyword id="KW-0511">Multifunctional enzyme</keyword>
<keyword id="KW-0548">Nucleotidyltransferase</keyword>
<keyword id="KW-0573">Peptidoglycan synthesis</keyword>
<keyword id="KW-0677">Repeat</keyword>
<keyword id="KW-0808">Transferase</keyword>
<name>GLMU_ECODH</name>
<feature type="chain" id="PRO_1000186448" description="Bifunctional protein GlmU">
    <location>
        <begin position="1"/>
        <end position="456"/>
    </location>
</feature>
<feature type="region of interest" description="Pyrophosphorylase" evidence="1">
    <location>
        <begin position="1"/>
        <end position="229"/>
    </location>
</feature>
<feature type="region of interest" description="Linker" evidence="1">
    <location>
        <begin position="230"/>
        <end position="250"/>
    </location>
</feature>
<feature type="region of interest" description="N-acetyltransferase" evidence="1">
    <location>
        <begin position="251"/>
        <end position="456"/>
    </location>
</feature>
<feature type="active site" description="Proton acceptor" evidence="1">
    <location>
        <position position="363"/>
    </location>
</feature>
<feature type="binding site" evidence="1">
    <location>
        <begin position="11"/>
        <end position="14"/>
    </location>
    <ligand>
        <name>UDP-N-acetyl-alpha-D-glucosamine</name>
        <dbReference type="ChEBI" id="CHEBI:57705"/>
    </ligand>
</feature>
<feature type="binding site" evidence="1">
    <location>
        <position position="25"/>
    </location>
    <ligand>
        <name>UDP-N-acetyl-alpha-D-glucosamine</name>
        <dbReference type="ChEBI" id="CHEBI:57705"/>
    </ligand>
</feature>
<feature type="binding site" evidence="1">
    <location>
        <position position="76"/>
    </location>
    <ligand>
        <name>UDP-N-acetyl-alpha-D-glucosamine</name>
        <dbReference type="ChEBI" id="CHEBI:57705"/>
    </ligand>
</feature>
<feature type="binding site" evidence="1">
    <location>
        <begin position="81"/>
        <end position="82"/>
    </location>
    <ligand>
        <name>UDP-N-acetyl-alpha-D-glucosamine</name>
        <dbReference type="ChEBI" id="CHEBI:57705"/>
    </ligand>
</feature>
<feature type="binding site" evidence="1">
    <location>
        <begin position="103"/>
        <end position="105"/>
    </location>
    <ligand>
        <name>UDP-N-acetyl-alpha-D-glucosamine</name>
        <dbReference type="ChEBI" id="CHEBI:57705"/>
    </ligand>
</feature>
<feature type="binding site" evidence="1">
    <location>
        <position position="105"/>
    </location>
    <ligand>
        <name>Mg(2+)</name>
        <dbReference type="ChEBI" id="CHEBI:18420"/>
    </ligand>
</feature>
<feature type="binding site" evidence="1">
    <location>
        <position position="140"/>
    </location>
    <ligand>
        <name>UDP-N-acetyl-alpha-D-glucosamine</name>
        <dbReference type="ChEBI" id="CHEBI:57705"/>
    </ligand>
</feature>
<feature type="binding site" evidence="1">
    <location>
        <position position="154"/>
    </location>
    <ligand>
        <name>UDP-N-acetyl-alpha-D-glucosamine</name>
        <dbReference type="ChEBI" id="CHEBI:57705"/>
    </ligand>
</feature>
<feature type="binding site" evidence="1">
    <location>
        <position position="169"/>
    </location>
    <ligand>
        <name>UDP-N-acetyl-alpha-D-glucosamine</name>
        <dbReference type="ChEBI" id="CHEBI:57705"/>
    </ligand>
</feature>
<feature type="binding site" evidence="1">
    <location>
        <position position="227"/>
    </location>
    <ligand>
        <name>Mg(2+)</name>
        <dbReference type="ChEBI" id="CHEBI:18420"/>
    </ligand>
</feature>
<feature type="binding site" evidence="1">
    <location>
        <position position="227"/>
    </location>
    <ligand>
        <name>UDP-N-acetyl-alpha-D-glucosamine</name>
        <dbReference type="ChEBI" id="CHEBI:57705"/>
    </ligand>
</feature>
<feature type="binding site" evidence="1">
    <location>
        <position position="333"/>
    </location>
    <ligand>
        <name>UDP-N-acetyl-alpha-D-glucosamine</name>
        <dbReference type="ChEBI" id="CHEBI:57705"/>
    </ligand>
</feature>
<feature type="binding site" evidence="1">
    <location>
        <position position="351"/>
    </location>
    <ligand>
        <name>UDP-N-acetyl-alpha-D-glucosamine</name>
        <dbReference type="ChEBI" id="CHEBI:57705"/>
    </ligand>
</feature>
<feature type="binding site" evidence="1">
    <location>
        <position position="366"/>
    </location>
    <ligand>
        <name>UDP-N-acetyl-alpha-D-glucosamine</name>
        <dbReference type="ChEBI" id="CHEBI:57705"/>
    </ligand>
</feature>
<feature type="binding site" evidence="1">
    <location>
        <position position="377"/>
    </location>
    <ligand>
        <name>UDP-N-acetyl-alpha-D-glucosamine</name>
        <dbReference type="ChEBI" id="CHEBI:57705"/>
    </ligand>
</feature>
<feature type="binding site" evidence="1">
    <location>
        <position position="380"/>
    </location>
    <ligand>
        <name>acetyl-CoA</name>
        <dbReference type="ChEBI" id="CHEBI:57288"/>
    </ligand>
</feature>
<feature type="binding site" evidence="1">
    <location>
        <begin position="386"/>
        <end position="387"/>
    </location>
    <ligand>
        <name>acetyl-CoA</name>
        <dbReference type="ChEBI" id="CHEBI:57288"/>
    </ligand>
</feature>
<feature type="binding site" evidence="1">
    <location>
        <position position="405"/>
    </location>
    <ligand>
        <name>acetyl-CoA</name>
        <dbReference type="ChEBI" id="CHEBI:57288"/>
    </ligand>
</feature>
<feature type="binding site" evidence="1">
    <location>
        <position position="423"/>
    </location>
    <ligand>
        <name>acetyl-CoA</name>
        <dbReference type="ChEBI" id="CHEBI:57288"/>
    </ligand>
</feature>
<feature type="binding site" evidence="1">
    <location>
        <position position="440"/>
    </location>
    <ligand>
        <name>acetyl-CoA</name>
        <dbReference type="ChEBI" id="CHEBI:57288"/>
    </ligand>
</feature>
<gene>
    <name evidence="1" type="primary">glmU</name>
    <name type="ordered locus">ECDH10B_3917</name>
</gene>
<proteinExistence type="inferred from homology"/>
<dbReference type="EC" id="2.7.7.23" evidence="1"/>
<dbReference type="EC" id="2.3.1.157" evidence="1"/>
<dbReference type="EMBL" id="CP000948">
    <property type="protein sequence ID" value="ACB04773.1"/>
    <property type="molecule type" value="Genomic_DNA"/>
</dbReference>
<dbReference type="RefSeq" id="WP_000933736.1">
    <property type="nucleotide sequence ID" value="NC_010473.1"/>
</dbReference>
<dbReference type="SMR" id="B1X9V8"/>
<dbReference type="GeneID" id="75205448"/>
<dbReference type="KEGG" id="ecd:ECDH10B_3917"/>
<dbReference type="HOGENOM" id="CLU_029499_15_2_6"/>
<dbReference type="UniPathway" id="UPA00113">
    <property type="reaction ID" value="UER00532"/>
</dbReference>
<dbReference type="UniPathway" id="UPA00113">
    <property type="reaction ID" value="UER00533"/>
</dbReference>
<dbReference type="UniPathway" id="UPA00973"/>
<dbReference type="GO" id="GO:0005737">
    <property type="term" value="C:cytoplasm"/>
    <property type="evidence" value="ECO:0007669"/>
    <property type="project" value="UniProtKB-SubCell"/>
</dbReference>
<dbReference type="GO" id="GO:0016020">
    <property type="term" value="C:membrane"/>
    <property type="evidence" value="ECO:0007669"/>
    <property type="project" value="GOC"/>
</dbReference>
<dbReference type="GO" id="GO:0019134">
    <property type="term" value="F:glucosamine-1-phosphate N-acetyltransferase activity"/>
    <property type="evidence" value="ECO:0007669"/>
    <property type="project" value="UniProtKB-UniRule"/>
</dbReference>
<dbReference type="GO" id="GO:0000287">
    <property type="term" value="F:magnesium ion binding"/>
    <property type="evidence" value="ECO:0007669"/>
    <property type="project" value="UniProtKB-UniRule"/>
</dbReference>
<dbReference type="GO" id="GO:0003977">
    <property type="term" value="F:UDP-N-acetylglucosamine diphosphorylase activity"/>
    <property type="evidence" value="ECO:0007669"/>
    <property type="project" value="UniProtKB-UniRule"/>
</dbReference>
<dbReference type="GO" id="GO:0000902">
    <property type="term" value="P:cell morphogenesis"/>
    <property type="evidence" value="ECO:0007669"/>
    <property type="project" value="UniProtKB-UniRule"/>
</dbReference>
<dbReference type="GO" id="GO:0071555">
    <property type="term" value="P:cell wall organization"/>
    <property type="evidence" value="ECO:0007669"/>
    <property type="project" value="UniProtKB-KW"/>
</dbReference>
<dbReference type="GO" id="GO:0009245">
    <property type="term" value="P:lipid A biosynthetic process"/>
    <property type="evidence" value="ECO:0007669"/>
    <property type="project" value="UniProtKB-UniRule"/>
</dbReference>
<dbReference type="GO" id="GO:0009252">
    <property type="term" value="P:peptidoglycan biosynthetic process"/>
    <property type="evidence" value="ECO:0007669"/>
    <property type="project" value="UniProtKB-UniRule"/>
</dbReference>
<dbReference type="GO" id="GO:0008360">
    <property type="term" value="P:regulation of cell shape"/>
    <property type="evidence" value="ECO:0007669"/>
    <property type="project" value="UniProtKB-KW"/>
</dbReference>
<dbReference type="GO" id="GO:0006048">
    <property type="term" value="P:UDP-N-acetylglucosamine biosynthetic process"/>
    <property type="evidence" value="ECO:0007669"/>
    <property type="project" value="UniProtKB-UniPathway"/>
</dbReference>
<dbReference type="CDD" id="cd02540">
    <property type="entry name" value="GT2_GlmU_N_bac"/>
    <property type="match status" value="1"/>
</dbReference>
<dbReference type="CDD" id="cd03353">
    <property type="entry name" value="LbH_GlmU_C"/>
    <property type="match status" value="1"/>
</dbReference>
<dbReference type="FunFam" id="2.160.10.10:FF:000011">
    <property type="entry name" value="Bifunctional protein GlmU"/>
    <property type="match status" value="1"/>
</dbReference>
<dbReference type="FunFam" id="3.90.550.10:FF:000006">
    <property type="entry name" value="Bifunctional protein GlmU"/>
    <property type="match status" value="1"/>
</dbReference>
<dbReference type="Gene3D" id="2.160.10.10">
    <property type="entry name" value="Hexapeptide repeat proteins"/>
    <property type="match status" value="1"/>
</dbReference>
<dbReference type="Gene3D" id="3.90.550.10">
    <property type="entry name" value="Spore Coat Polysaccharide Biosynthesis Protein SpsA, Chain A"/>
    <property type="match status" value="1"/>
</dbReference>
<dbReference type="HAMAP" id="MF_01631">
    <property type="entry name" value="GlmU"/>
    <property type="match status" value="1"/>
</dbReference>
<dbReference type="InterPro" id="IPR005882">
    <property type="entry name" value="Bifunctional_GlmU"/>
</dbReference>
<dbReference type="InterPro" id="IPR050065">
    <property type="entry name" value="GlmU-like"/>
</dbReference>
<dbReference type="InterPro" id="IPR038009">
    <property type="entry name" value="GlmU_C_LbH"/>
</dbReference>
<dbReference type="InterPro" id="IPR001451">
    <property type="entry name" value="Hexapep"/>
</dbReference>
<dbReference type="InterPro" id="IPR018357">
    <property type="entry name" value="Hexapep_transf_CS"/>
</dbReference>
<dbReference type="InterPro" id="IPR025877">
    <property type="entry name" value="MobA-like_NTP_Trfase"/>
</dbReference>
<dbReference type="InterPro" id="IPR029044">
    <property type="entry name" value="Nucleotide-diphossugar_trans"/>
</dbReference>
<dbReference type="InterPro" id="IPR011004">
    <property type="entry name" value="Trimer_LpxA-like_sf"/>
</dbReference>
<dbReference type="NCBIfam" id="TIGR01173">
    <property type="entry name" value="glmU"/>
    <property type="match status" value="1"/>
</dbReference>
<dbReference type="NCBIfam" id="NF006986">
    <property type="entry name" value="PRK09451.1"/>
    <property type="match status" value="1"/>
</dbReference>
<dbReference type="PANTHER" id="PTHR43584:SF3">
    <property type="entry name" value="BIFUNCTIONAL PROTEIN GLMU"/>
    <property type="match status" value="1"/>
</dbReference>
<dbReference type="PANTHER" id="PTHR43584">
    <property type="entry name" value="NUCLEOTIDYL TRANSFERASE"/>
    <property type="match status" value="1"/>
</dbReference>
<dbReference type="Pfam" id="PF00132">
    <property type="entry name" value="Hexapep"/>
    <property type="match status" value="1"/>
</dbReference>
<dbReference type="Pfam" id="PF12804">
    <property type="entry name" value="NTP_transf_3"/>
    <property type="match status" value="1"/>
</dbReference>
<dbReference type="SUPFAM" id="SSF53448">
    <property type="entry name" value="Nucleotide-diphospho-sugar transferases"/>
    <property type="match status" value="1"/>
</dbReference>
<dbReference type="SUPFAM" id="SSF51161">
    <property type="entry name" value="Trimeric LpxA-like enzymes"/>
    <property type="match status" value="1"/>
</dbReference>
<dbReference type="PROSITE" id="PS00101">
    <property type="entry name" value="HEXAPEP_TRANSFERASES"/>
    <property type="match status" value="1"/>
</dbReference>
<evidence type="ECO:0000255" key="1">
    <source>
        <dbReference type="HAMAP-Rule" id="MF_01631"/>
    </source>
</evidence>
<protein>
    <recommendedName>
        <fullName evidence="1">Bifunctional protein GlmU</fullName>
    </recommendedName>
    <domain>
        <recommendedName>
            <fullName evidence="1">UDP-N-acetylglucosamine pyrophosphorylase</fullName>
            <ecNumber evidence="1">2.7.7.23</ecNumber>
        </recommendedName>
        <alternativeName>
            <fullName evidence="1">N-acetylglucosamine-1-phosphate uridyltransferase</fullName>
        </alternativeName>
    </domain>
    <domain>
        <recommendedName>
            <fullName evidence="1">Glucosamine-1-phosphate N-acetyltransferase</fullName>
            <ecNumber evidence="1">2.3.1.157</ecNumber>
        </recommendedName>
    </domain>
</protein>
<sequence>MLNNAMSVVILAAGKGTRMYSDLPKVLHTLAGKAMVQHVIDAANELGAAHVHLVYGHGGDLLKQALKDDNLNWVLQAEQLGTGHAMQQAAPFFADDEDILMLYGDVPLISVETLQRLRDAKPQGGIGLLTVKLDDPTGYGRITRENGKVTGIVEHKDATDEQRQIQEINTGILIANGADMKRWLAKLTNNNAQGEYYITDIIALAYQEGREIVAVHPQRLSEVEGVNNRLQLSRLERVYQSEQAEKLLLAGVMLRDPARFDLRGTLTHGRDVEIDTNVIIEGNVTLGHRVKIGTGCVIKNSVIGDDCEISPYTVVEDANLAAACTIGPFARLRPGAELLEGAHVGNFVEMKKARLGKGSKAGHLTYLGDAEIGDNVNIGAGTITCNYDGANKFKTIIGDDVFVGSDTQLVAPVTVGKGATIAAGTTVTRNVGENALAISRVPQTQKEGWRRPVKKK</sequence>
<accession>B1X9V8</accession>